<organism>
    <name type="scientific">Archaeoglobus fulgidus (strain ATCC 49558 / DSM 4304 / JCM 9628 / NBRC 100126 / VC-16)</name>
    <dbReference type="NCBI Taxonomy" id="224325"/>
    <lineage>
        <taxon>Archaea</taxon>
        <taxon>Methanobacteriati</taxon>
        <taxon>Methanobacteriota</taxon>
        <taxon>Archaeoglobi</taxon>
        <taxon>Archaeoglobales</taxon>
        <taxon>Archaeoglobaceae</taxon>
        <taxon>Archaeoglobus</taxon>
    </lineage>
</organism>
<accession>O29108</accession>
<dbReference type="EC" id="6.3.4.13"/>
<dbReference type="EMBL" id="AE000782">
    <property type="protein sequence ID" value="AAB90089.1"/>
    <property type="molecule type" value="Genomic_DNA"/>
</dbReference>
<dbReference type="PIR" id="D69394">
    <property type="entry name" value="D69394"/>
</dbReference>
<dbReference type="RefSeq" id="WP_010878654.1">
    <property type="nucleotide sequence ID" value="NC_000917.1"/>
</dbReference>
<dbReference type="SMR" id="O29108"/>
<dbReference type="STRING" id="224325.AF_1157"/>
<dbReference type="PaxDb" id="224325-AF_1157"/>
<dbReference type="EnsemblBacteria" id="AAB90089">
    <property type="protein sequence ID" value="AAB90089"/>
    <property type="gene ID" value="AF_1157"/>
</dbReference>
<dbReference type="GeneID" id="24794765"/>
<dbReference type="KEGG" id="afu:AF_1157"/>
<dbReference type="eggNOG" id="arCOG04415">
    <property type="taxonomic scope" value="Archaea"/>
</dbReference>
<dbReference type="HOGENOM" id="CLU_027420_3_0_2"/>
<dbReference type="OrthoDB" id="146558at2157"/>
<dbReference type="PhylomeDB" id="O29108"/>
<dbReference type="UniPathway" id="UPA00074">
    <property type="reaction ID" value="UER00125"/>
</dbReference>
<dbReference type="Proteomes" id="UP000002199">
    <property type="component" value="Chromosome"/>
</dbReference>
<dbReference type="GO" id="GO:0005524">
    <property type="term" value="F:ATP binding"/>
    <property type="evidence" value="ECO:0007669"/>
    <property type="project" value="UniProtKB-KW"/>
</dbReference>
<dbReference type="GO" id="GO:0046872">
    <property type="term" value="F:metal ion binding"/>
    <property type="evidence" value="ECO:0007669"/>
    <property type="project" value="UniProtKB-KW"/>
</dbReference>
<dbReference type="GO" id="GO:0004637">
    <property type="term" value="F:phosphoribosylamine-glycine ligase activity"/>
    <property type="evidence" value="ECO:0007669"/>
    <property type="project" value="UniProtKB-UniRule"/>
</dbReference>
<dbReference type="GO" id="GO:0006189">
    <property type="term" value="P:'de novo' IMP biosynthetic process"/>
    <property type="evidence" value="ECO:0007669"/>
    <property type="project" value="UniProtKB-UniRule"/>
</dbReference>
<dbReference type="GO" id="GO:0009113">
    <property type="term" value="P:purine nucleobase biosynthetic process"/>
    <property type="evidence" value="ECO:0007669"/>
    <property type="project" value="InterPro"/>
</dbReference>
<dbReference type="FunFam" id="3.30.1490.20:FF:000006">
    <property type="entry name" value="phosphoribosylamine--glycine ligase, chloroplastic-like"/>
    <property type="match status" value="1"/>
</dbReference>
<dbReference type="Gene3D" id="3.40.50.20">
    <property type="match status" value="1"/>
</dbReference>
<dbReference type="Gene3D" id="3.30.1490.20">
    <property type="entry name" value="ATP-grasp fold, A domain"/>
    <property type="match status" value="1"/>
</dbReference>
<dbReference type="Gene3D" id="3.30.470.20">
    <property type="entry name" value="ATP-grasp fold, B domain"/>
    <property type="match status" value="1"/>
</dbReference>
<dbReference type="Gene3D" id="3.90.600.10">
    <property type="entry name" value="Phosphoribosylglycinamide synthetase, C-terminal domain"/>
    <property type="match status" value="1"/>
</dbReference>
<dbReference type="HAMAP" id="MF_00138">
    <property type="entry name" value="GARS"/>
    <property type="match status" value="1"/>
</dbReference>
<dbReference type="InterPro" id="IPR011761">
    <property type="entry name" value="ATP-grasp"/>
</dbReference>
<dbReference type="InterPro" id="IPR013815">
    <property type="entry name" value="ATP_grasp_subdomain_1"/>
</dbReference>
<dbReference type="InterPro" id="IPR016185">
    <property type="entry name" value="PreATP-grasp_dom_sf"/>
</dbReference>
<dbReference type="InterPro" id="IPR020561">
    <property type="entry name" value="PRibGlycinamid_synth_ATP-grasp"/>
</dbReference>
<dbReference type="InterPro" id="IPR000115">
    <property type="entry name" value="PRibGlycinamide_synth"/>
</dbReference>
<dbReference type="InterPro" id="IPR020560">
    <property type="entry name" value="PRibGlycinamide_synth_C-dom"/>
</dbReference>
<dbReference type="InterPro" id="IPR037123">
    <property type="entry name" value="PRibGlycinamide_synth_C_sf"/>
</dbReference>
<dbReference type="InterPro" id="IPR020562">
    <property type="entry name" value="PRibGlycinamide_synth_N"/>
</dbReference>
<dbReference type="InterPro" id="IPR011054">
    <property type="entry name" value="Rudment_hybrid_motif"/>
</dbReference>
<dbReference type="NCBIfam" id="TIGR00877">
    <property type="entry name" value="purD"/>
    <property type="match status" value="1"/>
</dbReference>
<dbReference type="PANTHER" id="PTHR43472">
    <property type="entry name" value="PHOSPHORIBOSYLAMINE--GLYCINE LIGASE"/>
    <property type="match status" value="1"/>
</dbReference>
<dbReference type="PANTHER" id="PTHR43472:SF1">
    <property type="entry name" value="PHOSPHORIBOSYLAMINE--GLYCINE LIGASE, CHLOROPLASTIC"/>
    <property type="match status" value="1"/>
</dbReference>
<dbReference type="Pfam" id="PF01071">
    <property type="entry name" value="GARS_A"/>
    <property type="match status" value="1"/>
</dbReference>
<dbReference type="Pfam" id="PF02843">
    <property type="entry name" value="GARS_C"/>
    <property type="match status" value="1"/>
</dbReference>
<dbReference type="Pfam" id="PF02844">
    <property type="entry name" value="GARS_N"/>
    <property type="match status" value="1"/>
</dbReference>
<dbReference type="SMART" id="SM01209">
    <property type="entry name" value="GARS_A"/>
    <property type="match status" value="1"/>
</dbReference>
<dbReference type="SMART" id="SM01210">
    <property type="entry name" value="GARS_C"/>
    <property type="match status" value="1"/>
</dbReference>
<dbReference type="SUPFAM" id="SSF56059">
    <property type="entry name" value="Glutathione synthetase ATP-binding domain-like"/>
    <property type="match status" value="1"/>
</dbReference>
<dbReference type="SUPFAM" id="SSF52440">
    <property type="entry name" value="PreATP-grasp domain"/>
    <property type="match status" value="1"/>
</dbReference>
<dbReference type="SUPFAM" id="SSF51246">
    <property type="entry name" value="Rudiment single hybrid motif"/>
    <property type="match status" value="1"/>
</dbReference>
<dbReference type="PROSITE" id="PS50975">
    <property type="entry name" value="ATP_GRASP"/>
    <property type="match status" value="1"/>
</dbReference>
<reference key="1">
    <citation type="journal article" date="1997" name="Nature">
        <title>The complete genome sequence of the hyperthermophilic, sulphate-reducing archaeon Archaeoglobus fulgidus.</title>
        <authorList>
            <person name="Klenk H.-P."/>
            <person name="Clayton R.A."/>
            <person name="Tomb J.-F."/>
            <person name="White O."/>
            <person name="Nelson K.E."/>
            <person name="Ketchum K.A."/>
            <person name="Dodson R.J."/>
            <person name="Gwinn M.L."/>
            <person name="Hickey E.K."/>
            <person name="Peterson J.D."/>
            <person name="Richardson D.L."/>
            <person name="Kerlavage A.R."/>
            <person name="Graham D.E."/>
            <person name="Kyrpides N.C."/>
            <person name="Fleischmann R.D."/>
            <person name="Quackenbush J."/>
            <person name="Lee N.H."/>
            <person name="Sutton G.G."/>
            <person name="Gill S.R."/>
            <person name="Kirkness E.F."/>
            <person name="Dougherty B.A."/>
            <person name="McKenney K."/>
            <person name="Adams M.D."/>
            <person name="Loftus B.J."/>
            <person name="Peterson S.N."/>
            <person name="Reich C.I."/>
            <person name="McNeil L.K."/>
            <person name="Badger J.H."/>
            <person name="Glodek A."/>
            <person name="Zhou L."/>
            <person name="Overbeek R."/>
            <person name="Gocayne J.D."/>
            <person name="Weidman J.F."/>
            <person name="McDonald L.A."/>
            <person name="Utterback T.R."/>
            <person name="Cotton M.D."/>
            <person name="Spriggs T."/>
            <person name="Artiach P."/>
            <person name="Kaine B.P."/>
            <person name="Sykes S.M."/>
            <person name="Sadow P.W."/>
            <person name="D'Andrea K.P."/>
            <person name="Bowman C."/>
            <person name="Fujii C."/>
            <person name="Garland S.A."/>
            <person name="Mason T.M."/>
            <person name="Olsen G.J."/>
            <person name="Fraser C.M."/>
            <person name="Smith H.O."/>
            <person name="Woese C.R."/>
            <person name="Venter J.C."/>
        </authorList>
    </citation>
    <scope>NUCLEOTIDE SEQUENCE [LARGE SCALE GENOMIC DNA]</scope>
    <source>
        <strain>ATCC 49558 / DSM 4304 / JCM 9628 / NBRC 100126 / VC-16</strain>
    </source>
</reference>
<gene>
    <name type="primary">purD</name>
    <name type="ordered locus">AF_1157</name>
</gene>
<proteinExistence type="inferred from homology"/>
<feature type="chain" id="PRO_0000151508" description="Phosphoribosylamine--glycine ligase">
    <location>
        <begin position="1"/>
        <end position="470"/>
    </location>
</feature>
<feature type="domain" description="ATP-grasp" evidence="2">
    <location>
        <begin position="115"/>
        <end position="354"/>
    </location>
</feature>
<feature type="binding site" evidence="2">
    <location>
        <begin position="142"/>
        <end position="203"/>
    </location>
    <ligand>
        <name>ATP</name>
        <dbReference type="ChEBI" id="CHEBI:30616"/>
    </ligand>
</feature>
<feature type="binding site" evidence="2">
    <location>
        <position position="324"/>
    </location>
    <ligand>
        <name>Mg(2+)</name>
        <dbReference type="ChEBI" id="CHEBI:18420"/>
    </ligand>
</feature>
<feature type="binding site" evidence="2">
    <location>
        <position position="326"/>
    </location>
    <ligand>
        <name>Mg(2+)</name>
        <dbReference type="ChEBI" id="CHEBI:18420"/>
    </ligand>
</feature>
<evidence type="ECO:0000250" key="1"/>
<evidence type="ECO:0000255" key="2">
    <source>
        <dbReference type="PROSITE-ProRule" id="PRU00409"/>
    </source>
</evidence>
<evidence type="ECO:0000305" key="3"/>
<protein>
    <recommendedName>
        <fullName>Phosphoribosylamine--glycine ligase</fullName>
        <ecNumber>6.3.4.13</ecNumber>
    </recommendedName>
    <alternativeName>
        <fullName>GARS</fullName>
    </alternativeName>
    <alternativeName>
        <fullName>Glycinamide ribonucleotide synthetase</fullName>
    </alternativeName>
    <alternativeName>
        <fullName>Phosphoribosylglycinamide synthetase</fullName>
    </alternativeName>
</protein>
<sequence length="470" mass="51750">MKVLVVDAGGRGNAIAHAFSRSEQVKEIYIAPGNGGSEFFEKCKIAELDGKKIPSIRAIDEIVRFAKKCEVDLAYIGPEEPLSLGLVDRLEEEGIPAVGPKKEATILEASKCWAKDFLKRIGVPIPEYANFDNPEEAKEYIREKFNNGIVVKADGLAAGKGVYVCDSVEEALRAVDEIMVQKKFGEAGNRIVVEERLRGIEVAFTAMTDGKTVKPFGHARDYKRAFDSDDIEGLRDFYIGLTKKFYTKAQIEQLYREGKLINPNTGGMGAVSPHPAVTEEVEQRIMEMVVEPIIENFDKEFKGVLYPVIMLVEENGELIPKVLEINVRDCDPGAEAKLPRLKSDMAEISMAVVEGRLDEVEMRFSSDYCVAVCAVSGALKGREGLKPGYPADHYTSQPITGIEEAMKEAIIYANGIAKTNGYVTTGGRVLTVVGMGQSIEEARSKAYSALEKISFPGMRYRRTIGLDVPE</sequence>
<comment type="catalytic activity">
    <reaction>
        <text>5-phospho-beta-D-ribosylamine + glycine + ATP = N(1)-(5-phospho-beta-D-ribosyl)glycinamide + ADP + phosphate + H(+)</text>
        <dbReference type="Rhea" id="RHEA:17453"/>
        <dbReference type="ChEBI" id="CHEBI:15378"/>
        <dbReference type="ChEBI" id="CHEBI:30616"/>
        <dbReference type="ChEBI" id="CHEBI:43474"/>
        <dbReference type="ChEBI" id="CHEBI:57305"/>
        <dbReference type="ChEBI" id="CHEBI:58681"/>
        <dbReference type="ChEBI" id="CHEBI:143788"/>
        <dbReference type="ChEBI" id="CHEBI:456216"/>
        <dbReference type="EC" id="6.3.4.13"/>
    </reaction>
</comment>
<comment type="cofactor">
    <cofactor evidence="1">
        <name>Mg(2+)</name>
        <dbReference type="ChEBI" id="CHEBI:18420"/>
    </cofactor>
    <cofactor evidence="1">
        <name>Mn(2+)</name>
        <dbReference type="ChEBI" id="CHEBI:29035"/>
    </cofactor>
    <text evidence="1">Binds 1 Mg(2+) or Mn(2+) ion per subunit.</text>
</comment>
<comment type="pathway">
    <text>Purine metabolism; IMP biosynthesis via de novo pathway; N(1)-(5-phospho-D-ribosyl)glycinamide from 5-phospho-alpha-D-ribose 1-diphosphate: step 2/2.</text>
</comment>
<comment type="similarity">
    <text evidence="3">Belongs to the GARS family.</text>
</comment>
<name>PUR2_ARCFU</name>
<keyword id="KW-0067">ATP-binding</keyword>
<keyword id="KW-0436">Ligase</keyword>
<keyword id="KW-0460">Magnesium</keyword>
<keyword id="KW-0464">Manganese</keyword>
<keyword id="KW-0479">Metal-binding</keyword>
<keyword id="KW-0547">Nucleotide-binding</keyword>
<keyword id="KW-0658">Purine biosynthesis</keyword>
<keyword id="KW-1185">Reference proteome</keyword>